<proteinExistence type="inferred from homology"/>
<reference key="1">
    <citation type="journal article" date="2003" name="Science">
        <title>Genome of Geobacter sulfurreducens: metal reduction in subsurface environments.</title>
        <authorList>
            <person name="Methe B.A."/>
            <person name="Nelson K.E."/>
            <person name="Eisen J.A."/>
            <person name="Paulsen I.T."/>
            <person name="Nelson W.C."/>
            <person name="Heidelberg J.F."/>
            <person name="Wu D."/>
            <person name="Wu M."/>
            <person name="Ward N.L."/>
            <person name="Beanan M.J."/>
            <person name="Dodson R.J."/>
            <person name="Madupu R."/>
            <person name="Brinkac L.M."/>
            <person name="Daugherty S.C."/>
            <person name="DeBoy R.T."/>
            <person name="Durkin A.S."/>
            <person name="Gwinn M.L."/>
            <person name="Kolonay J.F."/>
            <person name="Sullivan S.A."/>
            <person name="Haft D.H."/>
            <person name="Selengut J."/>
            <person name="Davidsen T.M."/>
            <person name="Zafar N."/>
            <person name="White O."/>
            <person name="Tran B."/>
            <person name="Romero C."/>
            <person name="Forberger H.A."/>
            <person name="Weidman J.F."/>
            <person name="Khouri H.M."/>
            <person name="Feldblyum T.V."/>
            <person name="Utterback T.R."/>
            <person name="Van Aken S.E."/>
            <person name="Lovley D.R."/>
            <person name="Fraser C.M."/>
        </authorList>
    </citation>
    <scope>NUCLEOTIDE SEQUENCE [LARGE SCALE GENOMIC DNA]</scope>
    <source>
        <strain>ATCC 51573 / DSM 12127 / PCA</strain>
    </source>
</reference>
<evidence type="ECO:0000255" key="1">
    <source>
        <dbReference type="HAMAP-Rule" id="MF_01328"/>
    </source>
</evidence>
<evidence type="ECO:0000305" key="2"/>
<gene>
    <name evidence="1" type="primary">rplD</name>
    <name type="ordered locus">GSU2856</name>
</gene>
<sequence>MATIDVFDISKNKVGVMDLNDNVFNGEVKEYLIHEAIKVQLANRRAGTVSVKNRAIVSGGGKKPYRQKGTGQARQGCIRAPHFVGGGVAFGPRPKVYNLSMNKKARKAAVRSALSMLYKENKLSVLDSFTLPSISTKGFVTVLKAFDLAKTLVVVDEPNLNLELSARNVKDVKVLKAEHLNVFDIVKYNNIIVTQSAVRTIEGVLQS</sequence>
<keyword id="KW-1185">Reference proteome</keyword>
<keyword id="KW-0687">Ribonucleoprotein</keyword>
<keyword id="KW-0689">Ribosomal protein</keyword>
<keyword id="KW-0694">RNA-binding</keyword>
<keyword id="KW-0699">rRNA-binding</keyword>
<accession>P61063</accession>
<feature type="chain" id="PRO_0000129220" description="Large ribosomal subunit protein uL4">
    <location>
        <begin position="1"/>
        <end position="207"/>
    </location>
</feature>
<dbReference type="EMBL" id="AE017180">
    <property type="protein sequence ID" value="AAR36249.1"/>
    <property type="molecule type" value="Genomic_DNA"/>
</dbReference>
<dbReference type="RefSeq" id="NP_953899.1">
    <property type="nucleotide sequence ID" value="NC_002939.5"/>
</dbReference>
<dbReference type="RefSeq" id="WP_010943485.1">
    <property type="nucleotide sequence ID" value="NC_002939.5"/>
</dbReference>
<dbReference type="SMR" id="P61063"/>
<dbReference type="FunCoup" id="P61063">
    <property type="interactions" value="714"/>
</dbReference>
<dbReference type="STRING" id="243231.GSU2856"/>
<dbReference type="EnsemblBacteria" id="AAR36249">
    <property type="protein sequence ID" value="AAR36249"/>
    <property type="gene ID" value="GSU2856"/>
</dbReference>
<dbReference type="KEGG" id="gsu:GSU2856"/>
<dbReference type="PATRIC" id="fig|243231.5.peg.2882"/>
<dbReference type="eggNOG" id="COG0088">
    <property type="taxonomic scope" value="Bacteria"/>
</dbReference>
<dbReference type="HOGENOM" id="CLU_041575_5_2_7"/>
<dbReference type="InParanoid" id="P61063"/>
<dbReference type="OrthoDB" id="9803201at2"/>
<dbReference type="Proteomes" id="UP000000577">
    <property type="component" value="Chromosome"/>
</dbReference>
<dbReference type="GO" id="GO:1990904">
    <property type="term" value="C:ribonucleoprotein complex"/>
    <property type="evidence" value="ECO:0007669"/>
    <property type="project" value="UniProtKB-KW"/>
</dbReference>
<dbReference type="GO" id="GO:0005840">
    <property type="term" value="C:ribosome"/>
    <property type="evidence" value="ECO:0007669"/>
    <property type="project" value="UniProtKB-KW"/>
</dbReference>
<dbReference type="GO" id="GO:0019843">
    <property type="term" value="F:rRNA binding"/>
    <property type="evidence" value="ECO:0007669"/>
    <property type="project" value="UniProtKB-UniRule"/>
</dbReference>
<dbReference type="GO" id="GO:0003735">
    <property type="term" value="F:structural constituent of ribosome"/>
    <property type="evidence" value="ECO:0000318"/>
    <property type="project" value="GO_Central"/>
</dbReference>
<dbReference type="GO" id="GO:0006412">
    <property type="term" value="P:translation"/>
    <property type="evidence" value="ECO:0007669"/>
    <property type="project" value="UniProtKB-UniRule"/>
</dbReference>
<dbReference type="Gene3D" id="3.40.1370.10">
    <property type="match status" value="1"/>
</dbReference>
<dbReference type="HAMAP" id="MF_01328_B">
    <property type="entry name" value="Ribosomal_uL4_B"/>
    <property type="match status" value="1"/>
</dbReference>
<dbReference type="InterPro" id="IPR002136">
    <property type="entry name" value="Ribosomal_uL4"/>
</dbReference>
<dbReference type="InterPro" id="IPR013005">
    <property type="entry name" value="Ribosomal_uL4-like"/>
</dbReference>
<dbReference type="InterPro" id="IPR023574">
    <property type="entry name" value="Ribosomal_uL4_dom_sf"/>
</dbReference>
<dbReference type="NCBIfam" id="TIGR03953">
    <property type="entry name" value="rplD_bact"/>
    <property type="match status" value="1"/>
</dbReference>
<dbReference type="PANTHER" id="PTHR10746">
    <property type="entry name" value="50S RIBOSOMAL PROTEIN L4"/>
    <property type="match status" value="1"/>
</dbReference>
<dbReference type="PANTHER" id="PTHR10746:SF6">
    <property type="entry name" value="LARGE RIBOSOMAL SUBUNIT PROTEIN UL4M"/>
    <property type="match status" value="1"/>
</dbReference>
<dbReference type="Pfam" id="PF00573">
    <property type="entry name" value="Ribosomal_L4"/>
    <property type="match status" value="1"/>
</dbReference>
<dbReference type="SUPFAM" id="SSF52166">
    <property type="entry name" value="Ribosomal protein L4"/>
    <property type="match status" value="1"/>
</dbReference>
<name>RL4_GEOSL</name>
<protein>
    <recommendedName>
        <fullName evidence="1">Large ribosomal subunit protein uL4</fullName>
    </recommendedName>
    <alternativeName>
        <fullName evidence="2">50S ribosomal protein L4</fullName>
    </alternativeName>
</protein>
<comment type="function">
    <text evidence="1">One of the primary rRNA binding proteins, this protein initially binds near the 5'-end of the 23S rRNA. It is important during the early stages of 50S assembly. It makes multiple contacts with different domains of the 23S rRNA in the assembled 50S subunit and ribosome.</text>
</comment>
<comment type="function">
    <text evidence="1">Forms part of the polypeptide exit tunnel.</text>
</comment>
<comment type="subunit">
    <text evidence="1">Part of the 50S ribosomal subunit.</text>
</comment>
<comment type="similarity">
    <text evidence="1">Belongs to the universal ribosomal protein uL4 family.</text>
</comment>
<organism>
    <name type="scientific">Geobacter sulfurreducens (strain ATCC 51573 / DSM 12127 / PCA)</name>
    <dbReference type="NCBI Taxonomy" id="243231"/>
    <lineage>
        <taxon>Bacteria</taxon>
        <taxon>Pseudomonadati</taxon>
        <taxon>Thermodesulfobacteriota</taxon>
        <taxon>Desulfuromonadia</taxon>
        <taxon>Geobacterales</taxon>
        <taxon>Geobacteraceae</taxon>
        <taxon>Geobacter</taxon>
    </lineage>
</organism>